<reference key="1">
    <citation type="journal article" date="2011" name="Proc. Natl. Acad. Sci. U.S.A.">
        <title>Genomic anatomy of Escherichia coli O157:H7 outbreaks.</title>
        <authorList>
            <person name="Eppinger M."/>
            <person name="Mammel M.K."/>
            <person name="Leclerc J.E."/>
            <person name="Ravel J."/>
            <person name="Cebula T.A."/>
        </authorList>
    </citation>
    <scope>NUCLEOTIDE SEQUENCE [LARGE SCALE GENOMIC DNA]</scope>
    <source>
        <strain>EC4115 / EHEC</strain>
    </source>
</reference>
<feature type="chain" id="PRO_1000128742" description="Large ribosomal subunit protein bL27">
    <location>
        <begin position="1"/>
        <end position="85"/>
    </location>
</feature>
<feature type="region of interest" description="Disordered" evidence="2">
    <location>
        <begin position="1"/>
        <end position="20"/>
    </location>
</feature>
<sequence length="85" mass="9124">MAHKKAGGSTRNGRDSEAKRLGVKRFGGESVLAGSIIVRQRGTKFHAGANVGCGRDHTLFAKADGKVKFEVKGPKNRKFISIEAE</sequence>
<organism>
    <name type="scientific">Escherichia coli O157:H7 (strain EC4115 / EHEC)</name>
    <dbReference type="NCBI Taxonomy" id="444450"/>
    <lineage>
        <taxon>Bacteria</taxon>
        <taxon>Pseudomonadati</taxon>
        <taxon>Pseudomonadota</taxon>
        <taxon>Gammaproteobacteria</taxon>
        <taxon>Enterobacterales</taxon>
        <taxon>Enterobacteriaceae</taxon>
        <taxon>Escherichia</taxon>
    </lineage>
</organism>
<name>RL27_ECO5E</name>
<proteinExistence type="inferred from homology"/>
<evidence type="ECO:0000255" key="1">
    <source>
        <dbReference type="HAMAP-Rule" id="MF_00539"/>
    </source>
</evidence>
<evidence type="ECO:0000256" key="2">
    <source>
        <dbReference type="SAM" id="MobiDB-lite"/>
    </source>
</evidence>
<evidence type="ECO:0000305" key="3"/>
<keyword id="KW-0687">Ribonucleoprotein</keyword>
<keyword id="KW-0689">Ribosomal protein</keyword>
<protein>
    <recommendedName>
        <fullName evidence="1">Large ribosomal subunit protein bL27</fullName>
    </recommendedName>
    <alternativeName>
        <fullName evidence="3">50S ribosomal protein L27</fullName>
    </alternativeName>
</protein>
<accession>B5YS74</accession>
<comment type="similarity">
    <text evidence="1">Belongs to the bacterial ribosomal protein bL27 family.</text>
</comment>
<gene>
    <name evidence="1" type="primary">rpmA</name>
    <name type="ordered locus">ECH74115_4507</name>
</gene>
<dbReference type="EMBL" id="CP001164">
    <property type="protein sequence ID" value="ACI36344.1"/>
    <property type="molecule type" value="Genomic_DNA"/>
</dbReference>
<dbReference type="RefSeq" id="WP_000940595.1">
    <property type="nucleotide sequence ID" value="NC_011353.1"/>
</dbReference>
<dbReference type="SMR" id="B5YS74"/>
<dbReference type="GeneID" id="93778796"/>
<dbReference type="KEGG" id="ecf:ECH74115_4507"/>
<dbReference type="HOGENOM" id="CLU_095424_4_1_6"/>
<dbReference type="GO" id="GO:0022625">
    <property type="term" value="C:cytosolic large ribosomal subunit"/>
    <property type="evidence" value="ECO:0007669"/>
    <property type="project" value="TreeGrafter"/>
</dbReference>
<dbReference type="GO" id="GO:0003735">
    <property type="term" value="F:structural constituent of ribosome"/>
    <property type="evidence" value="ECO:0007669"/>
    <property type="project" value="InterPro"/>
</dbReference>
<dbReference type="GO" id="GO:0006412">
    <property type="term" value="P:translation"/>
    <property type="evidence" value="ECO:0007669"/>
    <property type="project" value="UniProtKB-UniRule"/>
</dbReference>
<dbReference type="FunFam" id="2.40.50.100:FF:000001">
    <property type="entry name" value="50S ribosomal protein L27"/>
    <property type="match status" value="1"/>
</dbReference>
<dbReference type="Gene3D" id="2.40.50.100">
    <property type="match status" value="1"/>
</dbReference>
<dbReference type="HAMAP" id="MF_00539">
    <property type="entry name" value="Ribosomal_bL27"/>
    <property type="match status" value="1"/>
</dbReference>
<dbReference type="InterPro" id="IPR001684">
    <property type="entry name" value="Ribosomal_bL27"/>
</dbReference>
<dbReference type="InterPro" id="IPR018261">
    <property type="entry name" value="Ribosomal_bL27_CS"/>
</dbReference>
<dbReference type="NCBIfam" id="TIGR00062">
    <property type="entry name" value="L27"/>
    <property type="match status" value="1"/>
</dbReference>
<dbReference type="PANTHER" id="PTHR15893:SF0">
    <property type="entry name" value="LARGE RIBOSOMAL SUBUNIT PROTEIN BL27M"/>
    <property type="match status" value="1"/>
</dbReference>
<dbReference type="PANTHER" id="PTHR15893">
    <property type="entry name" value="RIBOSOMAL PROTEIN L27"/>
    <property type="match status" value="1"/>
</dbReference>
<dbReference type="Pfam" id="PF01016">
    <property type="entry name" value="Ribosomal_L27"/>
    <property type="match status" value="1"/>
</dbReference>
<dbReference type="PRINTS" id="PR00063">
    <property type="entry name" value="RIBOSOMALL27"/>
</dbReference>
<dbReference type="SUPFAM" id="SSF110324">
    <property type="entry name" value="Ribosomal L27 protein-like"/>
    <property type="match status" value="1"/>
</dbReference>
<dbReference type="PROSITE" id="PS00831">
    <property type="entry name" value="RIBOSOMAL_L27"/>
    <property type="match status" value="1"/>
</dbReference>